<dbReference type="EMBL" id="U28377">
    <property type="protein sequence ID" value="AAA69106.1"/>
    <property type="status" value="ALT_INIT"/>
    <property type="molecule type" value="Genomic_DNA"/>
</dbReference>
<dbReference type="EMBL" id="U00096">
    <property type="protein sequence ID" value="AAC75976.2"/>
    <property type="molecule type" value="Genomic_DNA"/>
</dbReference>
<dbReference type="EMBL" id="AP009048">
    <property type="protein sequence ID" value="BAE77002.1"/>
    <property type="status" value="ALT_INIT"/>
    <property type="molecule type" value="Genomic_DNA"/>
</dbReference>
<dbReference type="PIR" id="B65079">
    <property type="entry name" value="B65079"/>
</dbReference>
<dbReference type="RefSeq" id="NP_417414.2">
    <property type="nucleotide sequence ID" value="NC_000913.3"/>
</dbReference>
<dbReference type="RefSeq" id="WP_001297406.1">
    <property type="nucleotide sequence ID" value="NZ_STEB01000001.1"/>
</dbReference>
<dbReference type="BioGRID" id="4262347">
    <property type="interactions" value="3"/>
</dbReference>
<dbReference type="FunCoup" id="P64567">
    <property type="interactions" value="66"/>
</dbReference>
<dbReference type="STRING" id="511145.b2939"/>
<dbReference type="PaxDb" id="511145-b2939"/>
<dbReference type="EnsemblBacteria" id="AAC75976">
    <property type="protein sequence ID" value="AAC75976"/>
    <property type="gene ID" value="b2939"/>
</dbReference>
<dbReference type="GeneID" id="93779056"/>
<dbReference type="GeneID" id="947433"/>
<dbReference type="KEGG" id="ecj:JW2906"/>
<dbReference type="KEGG" id="eco:b2939"/>
<dbReference type="KEGG" id="ecoc:C3026_16090"/>
<dbReference type="PATRIC" id="fig|511145.12.peg.3033"/>
<dbReference type="EchoBASE" id="EB2956"/>
<dbReference type="eggNOG" id="ENOG5033JXD">
    <property type="taxonomic scope" value="Bacteria"/>
</dbReference>
<dbReference type="HOGENOM" id="CLU_216465_0_0_6"/>
<dbReference type="InParanoid" id="P64567"/>
<dbReference type="OrthoDB" id="6614543at2"/>
<dbReference type="PhylomeDB" id="P64567"/>
<dbReference type="BioCyc" id="EcoCyc:G7521-MONOMER"/>
<dbReference type="PRO" id="PR:P64567"/>
<dbReference type="Proteomes" id="UP000000625">
    <property type="component" value="Chromosome"/>
</dbReference>
<dbReference type="GO" id="GO:0005737">
    <property type="term" value="C:cytoplasm"/>
    <property type="evidence" value="ECO:0007669"/>
    <property type="project" value="UniProtKB-SubCell"/>
</dbReference>
<dbReference type="GO" id="GO:0010447">
    <property type="term" value="P:response to acidic pH"/>
    <property type="evidence" value="ECO:0000315"/>
    <property type="project" value="EcoCyc"/>
</dbReference>
<dbReference type="InterPro" id="IPR020196">
    <property type="entry name" value="Uncharacterised_YqgB"/>
</dbReference>
<dbReference type="NCBIfam" id="NF033844">
    <property type="entry name" value="small_YqgB"/>
    <property type="match status" value="1"/>
</dbReference>
<dbReference type="Pfam" id="PF11036">
    <property type="entry name" value="YqgB"/>
    <property type="match status" value="1"/>
</dbReference>
<organism>
    <name type="scientific">Escherichia coli (strain K12)</name>
    <dbReference type="NCBI Taxonomy" id="83333"/>
    <lineage>
        <taxon>Bacteria</taxon>
        <taxon>Pseudomonadati</taxon>
        <taxon>Pseudomonadota</taxon>
        <taxon>Gammaproteobacteria</taxon>
        <taxon>Enterobacterales</taxon>
        <taxon>Enterobacteriaceae</taxon>
        <taxon>Escherichia</taxon>
    </lineage>
</organism>
<evidence type="ECO:0000269" key="1">
    <source>
    </source>
</evidence>
<evidence type="ECO:0000269" key="2">
    <source>
    </source>
</evidence>
<evidence type="ECO:0000305" key="3"/>
<protein>
    <recommendedName>
        <fullName>Uncharacterized protein YqgB</fullName>
    </recommendedName>
</protein>
<comment type="subcellular location">
    <subcellularLocation>
        <location evidence="1">Cytoplasm</location>
    </subcellularLocation>
</comment>
<comment type="induction">
    <text evidence="1 2">Constitutively expressed; increases in exponential phase (PubMed:19121005), repressed by H(2)O(2) (PubMed:19121005) (at protein level).</text>
</comment>
<comment type="similarity">
    <text evidence="3">Belongs to the YqgB family.</text>
</comment>
<comment type="sequence caution" evidence="3">
    <conflict type="erroneous initiation">
        <sequence resource="EMBL-CDS" id="AAA69106"/>
    </conflict>
    <text>Extended N-terminus.</text>
</comment>
<comment type="sequence caution" evidence="3">
    <conflict type="erroneous initiation">
        <sequence resource="EMBL-CDS" id="BAE77002"/>
    </conflict>
    <text>Extended N-terminus.</text>
</comment>
<reference key="1">
    <citation type="journal article" date="1997" name="Science">
        <title>The complete genome sequence of Escherichia coli K-12.</title>
        <authorList>
            <person name="Blattner F.R."/>
            <person name="Plunkett G. III"/>
            <person name="Bloch C.A."/>
            <person name="Perna N.T."/>
            <person name="Burland V."/>
            <person name="Riley M."/>
            <person name="Collado-Vides J."/>
            <person name="Glasner J.D."/>
            <person name="Rode C.K."/>
            <person name="Mayhew G.F."/>
            <person name="Gregor J."/>
            <person name="Davis N.W."/>
            <person name="Kirkpatrick H.A."/>
            <person name="Goeden M.A."/>
            <person name="Rose D.J."/>
            <person name="Mau B."/>
            <person name="Shao Y."/>
        </authorList>
    </citation>
    <scope>NUCLEOTIDE SEQUENCE [LARGE SCALE GENOMIC DNA]</scope>
    <source>
        <strain>K12 / MG1655 / ATCC 47076</strain>
    </source>
</reference>
<reference key="2">
    <citation type="journal article" date="2006" name="Mol. Syst. Biol.">
        <title>Highly accurate genome sequences of Escherichia coli K-12 strains MG1655 and W3110.</title>
        <authorList>
            <person name="Hayashi K."/>
            <person name="Morooka N."/>
            <person name="Yamamoto Y."/>
            <person name="Fujita K."/>
            <person name="Isono K."/>
            <person name="Choi S."/>
            <person name="Ohtsubo E."/>
            <person name="Baba T."/>
            <person name="Wanner B.L."/>
            <person name="Mori H."/>
            <person name="Horiuchi T."/>
        </authorList>
    </citation>
    <scope>NUCLEOTIDE SEQUENCE [LARGE SCALE GENOMIC DNA]</scope>
    <source>
        <strain>K12 / W3110 / ATCC 27325 / DSM 5911</strain>
    </source>
</reference>
<reference key="3">
    <citation type="journal article" date="2008" name="Mol. Microbiol.">
        <title>Small membrane proteins found by comparative genomics and ribosome binding site models.</title>
        <authorList>
            <person name="Hemm M.R."/>
            <person name="Paul B.J."/>
            <person name="Schneider T.D."/>
            <person name="Storz G."/>
            <person name="Rudd K.E."/>
        </authorList>
    </citation>
    <scope>SUBCELLULAR LOCATION</scope>
    <scope>INDUCTION</scope>
    <source>
        <strain>K12 / MG1655 / ATCC 47076</strain>
    </source>
</reference>
<reference key="4">
    <citation type="journal article" date="2010" name="J. Bacteriol.">
        <title>Small stress response proteins in Escherichia coli: proteins missed by classical proteomic studies.</title>
        <authorList>
            <person name="Hemm M.R."/>
            <person name="Paul B.J."/>
            <person name="Miranda-Rios J."/>
            <person name="Zhang A."/>
            <person name="Soltanzad N."/>
            <person name="Storz G."/>
        </authorList>
    </citation>
    <scope>INDUCTION</scope>
    <source>
        <strain>K12 / MG1655 / ATCC 47076</strain>
    </source>
</reference>
<accession>P64567</accession>
<accession>P46877</accession>
<accession>Q2M9Q4</accession>
<feature type="chain" id="PRO_0000169382" description="Uncharacterized protein YqgB">
    <location>
        <begin position="1"/>
        <end position="43"/>
    </location>
</feature>
<proteinExistence type="evidence at protein level"/>
<sequence>MKKKPVAQLERQHSLLENPCAYGLLSQFQAAIVVNCFTLNKII</sequence>
<keyword id="KW-0963">Cytoplasm</keyword>
<keyword id="KW-1185">Reference proteome</keyword>
<keyword id="KW-0346">Stress response</keyword>
<gene>
    <name type="primary">yqgB</name>
    <name type="ordered locus">b2939</name>
    <name type="ordered locus">JW2906</name>
</gene>
<name>YQGB_ECOLI</name>